<keyword id="KW-0025">Alternative splicing</keyword>
<keyword id="KW-0028">Amino-acid biosynthesis</keyword>
<keyword id="KW-0129">CBS domain</keyword>
<keyword id="KW-0198">Cysteine biosynthesis</keyword>
<keyword id="KW-0963">Cytoplasm</keyword>
<keyword id="KW-0903">Direct protein sequencing</keyword>
<keyword id="KW-0349">Heme</keyword>
<keyword id="KW-0408">Iron</keyword>
<keyword id="KW-1017">Isopeptide bond</keyword>
<keyword id="KW-0456">Lyase</keyword>
<keyword id="KW-0479">Metal-binding</keyword>
<keyword id="KW-0539">Nucleus</keyword>
<keyword id="KW-0597">Phosphoprotein</keyword>
<keyword id="KW-0663">Pyridoxal phosphate</keyword>
<keyword id="KW-1185">Reference proteome</keyword>
<keyword id="KW-0832">Ubl conjugation</keyword>
<comment type="function">
    <text evidence="1 4 6">Hydro-lyase catalyzing the first step of the transsulfuration pathway, where the hydroxyl group of L-serine is displaced by L-homocysteine in a beta-replacement reaction to form L-cystathionine, the precursor of L-cysteine. This catabolic route allows the elimination of L-methionine and the toxic metabolite L-homocysteine (By similarity). Also involved in the production of hydrogen sulfide, a gasotransmitter with signaling and cytoprotective effects on neurons (PubMed:20149843, PubMed:8558235).</text>
</comment>
<comment type="catalytic activity">
    <reaction evidence="1">
        <text>L-homocysteine + L-serine = L,L-cystathionine + H2O</text>
        <dbReference type="Rhea" id="RHEA:10112"/>
        <dbReference type="ChEBI" id="CHEBI:15377"/>
        <dbReference type="ChEBI" id="CHEBI:33384"/>
        <dbReference type="ChEBI" id="CHEBI:58161"/>
        <dbReference type="ChEBI" id="CHEBI:58199"/>
        <dbReference type="EC" id="4.2.1.22"/>
    </reaction>
</comment>
<comment type="cofactor">
    <cofactor evidence="1">
        <name>pyridoxal 5'-phosphate</name>
        <dbReference type="ChEBI" id="CHEBI:597326"/>
    </cofactor>
</comment>
<comment type="activity regulation">
    <text evidence="1">Allosterically activated by S-adenosyl-methionine/AdoMet. Activated by S-adenosylhomocysteine/AdoHcy. Binds non-covalently to a heme group that may control the redox sensitivity of the enzyme.</text>
</comment>
<comment type="pathway">
    <text evidence="1">Amino-acid biosynthesis; L-cysteine biosynthesis; L-cysteine from L-homocysteine and L-serine: step 1/2.</text>
</comment>
<comment type="subunit">
    <text evidence="1">Homotetramer.</text>
</comment>
<comment type="subcellular location">
    <subcellularLocation>
        <location evidence="1">Cytoplasm</location>
    </subcellularLocation>
    <subcellularLocation>
        <location evidence="1">Nucleus</location>
    </subcellularLocation>
</comment>
<comment type="alternative products">
    <event type="alternative splicing"/>
    <isoform>
        <id>P32232-1</id>
        <name>I</name>
        <sequence type="displayed"/>
    </isoform>
    <isoform>
        <id>P32232-4</id>
        <name>II</name>
        <sequence type="not described"/>
    </isoform>
    <isoform>
        <id>P32232-2</id>
        <name>III</name>
        <sequence type="described" ref="VSP_001218"/>
    </isoform>
    <isoform>
        <id>P32232-3</id>
        <name>IV</name>
        <sequence type="described" ref="VSP_001220 VSP_001221"/>
    </isoform>
</comment>
<comment type="tissue specificity">
    <text evidence="5 6">Expressed in liver, kidney and brain. Highly expressed in the hippocamus and cerebellum.</text>
</comment>
<comment type="similarity">
    <text evidence="7">Belongs to the cysteine synthase/cystathionine beta-synthase family.</text>
</comment>
<organism>
    <name type="scientific">Rattus norvegicus</name>
    <name type="common">Rat</name>
    <dbReference type="NCBI Taxonomy" id="10116"/>
    <lineage>
        <taxon>Eukaryota</taxon>
        <taxon>Metazoa</taxon>
        <taxon>Chordata</taxon>
        <taxon>Craniata</taxon>
        <taxon>Vertebrata</taxon>
        <taxon>Euteleostomi</taxon>
        <taxon>Mammalia</taxon>
        <taxon>Eutheria</taxon>
        <taxon>Euarchontoglires</taxon>
        <taxon>Glires</taxon>
        <taxon>Rodentia</taxon>
        <taxon>Myomorpha</taxon>
        <taxon>Muroidea</taxon>
        <taxon>Muridae</taxon>
        <taxon>Murinae</taxon>
        <taxon>Rattus</taxon>
    </lineage>
</organism>
<protein>
    <recommendedName>
        <fullName evidence="7">Cystathionine beta-synthase</fullName>
        <ecNumber evidence="1">4.2.1.22</ecNumber>
    </recommendedName>
    <alternativeName>
        <fullName>Beta-thionase</fullName>
    </alternativeName>
    <alternativeName>
        <fullName>Hemoprotein H-450</fullName>
    </alternativeName>
    <alternativeName>
        <fullName>Serine sulfhydrase</fullName>
    </alternativeName>
</protein>
<feature type="initiator methionine" description="Removed" evidence="5">
    <location>
        <position position="1"/>
    </location>
</feature>
<feature type="chain" id="PRO_0000167134" description="Cystathionine beta-synthase">
    <location>
        <begin position="2"/>
        <end position="561"/>
    </location>
</feature>
<feature type="domain" description="CBS" evidence="2">
    <location>
        <begin position="414"/>
        <end position="474"/>
    </location>
</feature>
<feature type="region of interest" description="Disordered" evidence="3">
    <location>
        <begin position="1"/>
        <end position="45"/>
    </location>
</feature>
<feature type="compositionally biased region" description="Basic and acidic residues" evidence="3">
    <location>
        <begin position="22"/>
        <end position="39"/>
    </location>
</feature>
<feature type="binding site" description="axial binding residue" evidence="1">
    <location>
        <position position="49"/>
    </location>
    <ligand>
        <name>heme</name>
        <dbReference type="ChEBI" id="CHEBI:30413"/>
    </ligand>
    <ligandPart>
        <name>Fe</name>
        <dbReference type="ChEBI" id="CHEBI:18248"/>
    </ligandPart>
</feature>
<feature type="binding site" description="axial binding residue" evidence="1">
    <location>
        <position position="62"/>
    </location>
    <ligand>
        <name>heme</name>
        <dbReference type="ChEBI" id="CHEBI:30413"/>
    </ligand>
    <ligandPart>
        <name>Fe</name>
        <dbReference type="ChEBI" id="CHEBI:18248"/>
    </ligandPart>
</feature>
<feature type="binding site" evidence="1">
    <location>
        <position position="146"/>
    </location>
    <ligand>
        <name>pyridoxal 5'-phosphate</name>
        <dbReference type="ChEBI" id="CHEBI:597326"/>
    </ligand>
</feature>
<feature type="binding site" evidence="1">
    <location>
        <begin position="253"/>
        <end position="257"/>
    </location>
    <ligand>
        <name>pyridoxal 5'-phosphate</name>
        <dbReference type="ChEBI" id="CHEBI:597326"/>
    </ligand>
</feature>
<feature type="binding site" evidence="1">
    <location>
        <position position="346"/>
    </location>
    <ligand>
        <name>pyridoxal 5'-phosphate</name>
        <dbReference type="ChEBI" id="CHEBI:597326"/>
    </ligand>
</feature>
<feature type="modified residue" description="Phosphoserine" evidence="8">
    <location>
        <position position="42"/>
    </location>
</feature>
<feature type="modified residue" description="N6-(pyridoxal phosphate)lysine" evidence="1">
    <location>
        <position position="116"/>
    </location>
</feature>
<feature type="modified residue" description="Phosphoserine" evidence="1">
    <location>
        <position position="196"/>
    </location>
</feature>
<feature type="cross-link" description="Glycyl lysine isopeptide (Lys-Gly) (interchain with G-Cter in SUMO)" evidence="1">
    <location>
        <position position="208"/>
    </location>
</feature>
<feature type="splice variant" id="VSP_001220" description="In isoform IV." evidence="7">
    <original>AILGMVTLGNMLSSLLAGKVRPSDEVCKV</original>
    <variation>LRQSKDICHPTKRHIIQAHGLRKVPDTEA</variation>
    <location>
        <begin position="450"/>
        <end position="478"/>
    </location>
</feature>
<feature type="splice variant" id="VSP_001221" description="In isoform IV." evidence="7">
    <location>
        <begin position="479"/>
        <end position="561"/>
    </location>
</feature>
<feature type="splice variant" id="VSP_001218" description="In isoform III." evidence="7">
    <original>SRDQAWSGVVGGPTD</original>
    <variation>Y</variation>
    <location>
        <begin position="514"/>
        <end position="528"/>
    </location>
</feature>
<feature type="sequence conflict" description="In Ref. 2; BAA00883." evidence="7" ref="2">
    <original>L</original>
    <variation>P</variation>
    <location>
        <position position="415"/>
    </location>
</feature>
<evidence type="ECO:0000250" key="1">
    <source>
        <dbReference type="UniProtKB" id="P35520"/>
    </source>
</evidence>
<evidence type="ECO:0000255" key="2">
    <source>
        <dbReference type="PROSITE-ProRule" id="PRU00703"/>
    </source>
</evidence>
<evidence type="ECO:0000256" key="3">
    <source>
        <dbReference type="SAM" id="MobiDB-lite"/>
    </source>
</evidence>
<evidence type="ECO:0000269" key="4">
    <source>
    </source>
</evidence>
<evidence type="ECO:0000269" key="5">
    <source>
    </source>
</evidence>
<evidence type="ECO:0000269" key="6">
    <source>
    </source>
</evidence>
<evidence type="ECO:0000305" key="7"/>
<evidence type="ECO:0007744" key="8">
    <source>
    </source>
</evidence>
<gene>
    <name type="primary">Cbs</name>
</gene>
<proteinExistence type="evidence at protein level"/>
<name>CBS_RAT</name>
<sequence length="561" mass="61455">MPSGTSQCEDGSAGCPQDLEVQPEKGQLEKGASGDKERVWISPDTPSRCTWQLGRPMADSPHYHTVPTKSPKILPDILRKIGNTPMVRINRISKNAGLKCELLAKCEFFNAGGSVKDRISLRMIEDAERAGTLKPGDTIIEPTSGNTGIGLALAAAVKGYRCIIVMPEKMSMEKVDVLRALGAEIVRTPTNARFDSPESHVGVAWRLKNEIPNSHILDQYRNASNPLAHYDDTAEEILQQCDGKVDMLVASAGTGGTITGIARKLKEKCPGCKIIGVDPEGSILAEPEELNQTEQTAYEVEGIGYDFIPTVLDRAVVDRWFKSNDDDSFAFARMLISQEGLLCGGSSGSAMAVAVKAAQELKEGQRCVVILPDSVRNYMSKFLSDKWMLQKGFMKEELSVKRPWWWHLRVQELSLSAPLTVLPTVTCEHTIAILREKGFDQAPVVNESGAILGMVTLGNMLSSLLAGKVRPSDEVCKVLYKQFKPIHLTDTLGMLSHILEMDHFALVVHEQIQSRDQAWSGVVGGPTDRNNGVSSKQLMVFGVVTAIDLLNFVAAREQTRK</sequence>
<reference key="1">
    <citation type="journal article" date="1992" name="J. Biol. Chem.">
        <title>Rat cystathionine beta-synthase. Gene organization and alternative splicing.</title>
        <authorList>
            <person name="Swaroop M."/>
            <person name="Bradley K."/>
            <person name="Ohura T."/>
            <person name="Tahara T."/>
            <person name="Roper M.D."/>
            <person name="Rosenberg L.E."/>
            <person name="Kraus J.P."/>
        </authorList>
    </citation>
    <scope>NUCLEOTIDE SEQUENCE [MRNA]</scope>
    <scope>PARTIAL PROTEIN SEQUENCE</scope>
    <scope>ALTERNATIVE SPLICING (ISOFORMS I; II; III AND IV)</scope>
    <source>
        <tissue>Liver</tissue>
    </source>
</reference>
<reference key="2">
    <citation type="journal article" date="1990" name="J. Biochem.">
        <title>Molecular cloning and sequence analysis of cDNA coding for rat liver hemoprotein H-450.</title>
        <authorList>
            <person name="Ishihara S."/>
            <person name="Morohashi K."/>
            <person name="Sadano H."/>
            <person name="Kawabata S."/>
            <person name="Gotoh O."/>
            <person name="Omura T."/>
        </authorList>
    </citation>
    <scope>NUCLEOTIDE SEQUENCE [MRNA]</scope>
    <scope>PROTEIN SEQUENCE OF 2-23 AND 39-48</scope>
    <scope>TISSUE SPECIFICITY</scope>
    <source>
        <strain>Sprague-Dawley</strain>
        <tissue>Liver</tissue>
    </source>
</reference>
<reference key="3">
    <citation type="journal article" date="1996" name="J. Neurosci.">
        <title>The possible role of hydrogen sulfide as an endogenous neuromodulator.</title>
        <authorList>
            <person name="Abe K."/>
            <person name="Kimura H."/>
        </authorList>
    </citation>
    <scope>FUNCTION</scope>
    <scope>TISSUE SPECIFICITY</scope>
</reference>
<reference key="4">
    <citation type="journal article" date="2010" name="Neuroscience">
        <title>Hydrogen sulfide protects neurons against hypoxic injury via stimulation of ATP-sensitive potassium channel/protein kinase C/extracellular signal-regulated kinase/heat shock protein 90 pathway.</title>
        <authorList>
            <person name="Tay A.S."/>
            <person name="Hu L.F."/>
            <person name="Lu M."/>
            <person name="Wong P.T."/>
            <person name="Bian J.S."/>
        </authorList>
    </citation>
    <scope>FUNCTION</scope>
</reference>
<reference key="5">
    <citation type="journal article" date="2012" name="Nat. Commun.">
        <title>Quantitative maps of protein phosphorylation sites across 14 different rat organs and tissues.</title>
        <authorList>
            <person name="Lundby A."/>
            <person name="Secher A."/>
            <person name="Lage K."/>
            <person name="Nordsborg N.B."/>
            <person name="Dmytriyev A."/>
            <person name="Lundby C."/>
            <person name="Olsen J.V."/>
        </authorList>
    </citation>
    <scope>PHOSPHORYLATION [LARGE SCALE ANALYSIS] AT SER-42</scope>
    <scope>IDENTIFICATION BY MASS SPECTROMETRY [LARGE SCALE ANALYSIS]</scope>
</reference>
<dbReference type="EC" id="4.2.1.22" evidence="1"/>
<dbReference type="EMBL" id="M88344">
    <property type="protein sequence ID" value="AAB02042.1"/>
    <property type="molecule type" value="mRNA"/>
</dbReference>
<dbReference type="EMBL" id="M88346">
    <property type="protein sequence ID" value="AAA42024.1"/>
    <property type="molecule type" value="mRNA"/>
</dbReference>
<dbReference type="EMBL" id="D01098">
    <property type="protein sequence ID" value="BAA00883.1"/>
    <property type="molecule type" value="mRNA"/>
</dbReference>
<dbReference type="PIR" id="A42790">
    <property type="entry name" value="A42790"/>
</dbReference>
<dbReference type="PIR" id="C42790">
    <property type="entry name" value="C42790"/>
</dbReference>
<dbReference type="RefSeq" id="NP_036654.2">
    <molecule id="P32232-2"/>
    <property type="nucleotide sequence ID" value="NM_012522.2"/>
</dbReference>
<dbReference type="SMR" id="P32232"/>
<dbReference type="FunCoup" id="P32232">
    <property type="interactions" value="207"/>
</dbReference>
<dbReference type="STRING" id="10116.ENSRNOP00000039968"/>
<dbReference type="iPTMnet" id="P32232"/>
<dbReference type="PhosphoSitePlus" id="P32232"/>
<dbReference type="PaxDb" id="10116-ENSRNOP00000039968"/>
<dbReference type="Ensembl" id="ENSRNOT00000042432.7">
    <molecule id="P32232-1"/>
    <property type="protein sequence ID" value="ENSRNOP00000039968.4"/>
    <property type="gene ID" value="ENSRNOG00000029528.7"/>
</dbReference>
<dbReference type="Ensembl" id="ENSRNOT00000045275.6">
    <molecule id="P32232-2"/>
    <property type="protein sequence ID" value="ENSRNOP00000042958.3"/>
    <property type="gene ID" value="ENSRNOG00000029528.7"/>
</dbReference>
<dbReference type="Ensembl" id="ENSRNOT00000116783.1">
    <molecule id="P32232-3"/>
    <property type="protein sequence ID" value="ENSRNOP00000082078.1"/>
    <property type="gene ID" value="ENSRNOG00000029528.7"/>
</dbReference>
<dbReference type="GeneID" id="24250"/>
<dbReference type="KEGG" id="rno:24250"/>
<dbReference type="UCSC" id="RGD:2287">
    <molecule id="P32232-1"/>
    <property type="organism name" value="rat"/>
</dbReference>
<dbReference type="AGR" id="RGD:2287"/>
<dbReference type="CTD" id="875"/>
<dbReference type="RGD" id="2287">
    <property type="gene designation" value="Cbs"/>
</dbReference>
<dbReference type="eggNOG" id="KOG1252">
    <property type="taxonomic scope" value="Eukaryota"/>
</dbReference>
<dbReference type="GeneTree" id="ENSGT00510000047027"/>
<dbReference type="HOGENOM" id="CLU_021018_0_0_1"/>
<dbReference type="InParanoid" id="P32232"/>
<dbReference type="OMA" id="KFADDEW"/>
<dbReference type="OrthoDB" id="728at2759"/>
<dbReference type="PhylomeDB" id="P32232"/>
<dbReference type="BioCyc" id="MetaCyc:MONOMER-8583"/>
<dbReference type="Reactome" id="R-RNO-1614603">
    <property type="pathway name" value="Cysteine formation from homocysteine"/>
</dbReference>
<dbReference type="SABIO-RK" id="P32232"/>
<dbReference type="UniPathway" id="UPA00136">
    <property type="reaction ID" value="UER00201"/>
</dbReference>
<dbReference type="PRO" id="PR:P32232"/>
<dbReference type="Proteomes" id="UP000002494">
    <property type="component" value="Chromosome 20"/>
</dbReference>
<dbReference type="Bgee" id="ENSRNOG00000029528">
    <property type="expression patterns" value="Expressed in pancreas and 18 other cell types or tissues"/>
</dbReference>
<dbReference type="GO" id="GO:0005737">
    <property type="term" value="C:cytoplasm"/>
    <property type="evidence" value="ECO:0000250"/>
    <property type="project" value="UniProtKB"/>
</dbReference>
<dbReference type="GO" id="GO:0005829">
    <property type="term" value="C:cytosol"/>
    <property type="evidence" value="ECO:0000304"/>
    <property type="project" value="Reactome"/>
</dbReference>
<dbReference type="GO" id="GO:0005634">
    <property type="term" value="C:nucleus"/>
    <property type="evidence" value="ECO:0000250"/>
    <property type="project" value="UniProtKB"/>
</dbReference>
<dbReference type="GO" id="GO:0070025">
    <property type="term" value="F:carbon monoxide binding"/>
    <property type="evidence" value="ECO:0000266"/>
    <property type="project" value="RGD"/>
</dbReference>
<dbReference type="GO" id="GO:0004122">
    <property type="term" value="F:cystathionine beta-synthase activity"/>
    <property type="evidence" value="ECO:0000266"/>
    <property type="project" value="RGD"/>
</dbReference>
<dbReference type="GO" id="GO:0019899">
    <property type="term" value="F:enzyme binding"/>
    <property type="evidence" value="ECO:0000266"/>
    <property type="project" value="RGD"/>
</dbReference>
<dbReference type="GO" id="GO:0020037">
    <property type="term" value="F:heme binding"/>
    <property type="evidence" value="ECO:0000266"/>
    <property type="project" value="RGD"/>
</dbReference>
<dbReference type="GO" id="GO:0042802">
    <property type="term" value="F:identical protein binding"/>
    <property type="evidence" value="ECO:0000266"/>
    <property type="project" value="RGD"/>
</dbReference>
<dbReference type="GO" id="GO:0046872">
    <property type="term" value="F:metal ion binding"/>
    <property type="evidence" value="ECO:0007669"/>
    <property type="project" value="UniProtKB-KW"/>
</dbReference>
<dbReference type="GO" id="GO:0072341">
    <property type="term" value="F:modified amino acid binding"/>
    <property type="evidence" value="ECO:0000266"/>
    <property type="project" value="RGD"/>
</dbReference>
<dbReference type="GO" id="GO:0070026">
    <property type="term" value="F:nitric oxide binding"/>
    <property type="evidence" value="ECO:0000266"/>
    <property type="project" value="RGD"/>
</dbReference>
<dbReference type="GO" id="GO:0050421">
    <property type="term" value="F:nitrite reductase (NO-forming) activity"/>
    <property type="evidence" value="ECO:0000266"/>
    <property type="project" value="RGD"/>
</dbReference>
<dbReference type="GO" id="GO:0019825">
    <property type="term" value="F:oxygen binding"/>
    <property type="evidence" value="ECO:0000266"/>
    <property type="project" value="RGD"/>
</dbReference>
<dbReference type="GO" id="GO:0042803">
    <property type="term" value="F:protein homodimerization activity"/>
    <property type="evidence" value="ECO:0000250"/>
    <property type="project" value="UniProtKB"/>
</dbReference>
<dbReference type="GO" id="GO:0030170">
    <property type="term" value="F:pyridoxal phosphate binding"/>
    <property type="evidence" value="ECO:0000250"/>
    <property type="project" value="UniProtKB"/>
</dbReference>
<dbReference type="GO" id="GO:1904047">
    <property type="term" value="F:S-adenosyl-L-methionine binding"/>
    <property type="evidence" value="ECO:0000266"/>
    <property type="project" value="RGD"/>
</dbReference>
<dbReference type="GO" id="GO:0031625">
    <property type="term" value="F:ubiquitin protein ligase binding"/>
    <property type="evidence" value="ECO:0000266"/>
    <property type="project" value="RGD"/>
</dbReference>
<dbReference type="GO" id="GO:0097746">
    <property type="term" value="P:blood vessel diameter maintenance"/>
    <property type="evidence" value="ECO:0000266"/>
    <property type="project" value="RGD"/>
</dbReference>
<dbReference type="GO" id="GO:0001974">
    <property type="term" value="P:blood vessel remodeling"/>
    <property type="evidence" value="ECO:0000266"/>
    <property type="project" value="RGD"/>
</dbReference>
<dbReference type="GO" id="GO:0060351">
    <property type="term" value="P:cartilage development involved in endochondral bone morphogenesis"/>
    <property type="evidence" value="ECO:0000266"/>
    <property type="project" value="RGD"/>
</dbReference>
<dbReference type="GO" id="GO:0071456">
    <property type="term" value="P:cellular response to hypoxia"/>
    <property type="evidence" value="ECO:0000314"/>
    <property type="project" value="UniProtKB"/>
</dbReference>
<dbReference type="GO" id="GO:0021587">
    <property type="term" value="P:cerebellum morphogenesis"/>
    <property type="evidence" value="ECO:0000266"/>
    <property type="project" value="RGD"/>
</dbReference>
<dbReference type="GO" id="GO:0019344">
    <property type="term" value="P:cysteine biosynthetic process"/>
    <property type="evidence" value="ECO:0000266"/>
    <property type="project" value="RGD"/>
</dbReference>
<dbReference type="GO" id="GO:0006535">
    <property type="term" value="P:cysteine biosynthetic process from serine"/>
    <property type="evidence" value="ECO:0000318"/>
    <property type="project" value="GO_Central"/>
</dbReference>
<dbReference type="GO" id="GO:0019343">
    <property type="term" value="P:cysteine biosynthetic process via cystathionine"/>
    <property type="evidence" value="ECO:0007669"/>
    <property type="project" value="InterPro"/>
</dbReference>
<dbReference type="GO" id="GO:0042262">
    <property type="term" value="P:DNA protection"/>
    <property type="evidence" value="ECO:0000266"/>
    <property type="project" value="RGD"/>
</dbReference>
<dbReference type="GO" id="GO:0001958">
    <property type="term" value="P:endochondral ossification"/>
    <property type="evidence" value="ECO:0000266"/>
    <property type="project" value="RGD"/>
</dbReference>
<dbReference type="GO" id="GO:0043418">
    <property type="term" value="P:homocysteine catabolic process"/>
    <property type="evidence" value="ECO:0000250"/>
    <property type="project" value="UniProtKB"/>
</dbReference>
<dbReference type="GO" id="GO:0050667">
    <property type="term" value="P:homocysteine metabolic process"/>
    <property type="evidence" value="ECO:0000266"/>
    <property type="project" value="RGD"/>
</dbReference>
<dbReference type="GO" id="GO:0070814">
    <property type="term" value="P:hydrogen sulfide biosynthetic process"/>
    <property type="evidence" value="ECO:0000314"/>
    <property type="project" value="UniProtKB"/>
</dbReference>
<dbReference type="GO" id="GO:0019448">
    <property type="term" value="P:L-cysteine catabolic process"/>
    <property type="evidence" value="ECO:0000266"/>
    <property type="project" value="RGD"/>
</dbReference>
<dbReference type="GO" id="GO:0006565">
    <property type="term" value="P:L-serine catabolic process"/>
    <property type="evidence" value="ECO:0000266"/>
    <property type="project" value="RGD"/>
</dbReference>
<dbReference type="GO" id="GO:0006563">
    <property type="term" value="P:L-serine metabolic process"/>
    <property type="evidence" value="ECO:0000250"/>
    <property type="project" value="UniProtKB"/>
</dbReference>
<dbReference type="GO" id="GO:0060135">
    <property type="term" value="P:maternal process involved in female pregnancy"/>
    <property type="evidence" value="ECO:0000266"/>
    <property type="project" value="RGD"/>
</dbReference>
<dbReference type="GO" id="GO:0043066">
    <property type="term" value="P:negative regulation of apoptotic process"/>
    <property type="evidence" value="ECO:0000314"/>
    <property type="project" value="UniProtKB"/>
</dbReference>
<dbReference type="GO" id="GO:0046328">
    <property type="term" value="P:regulation of JNK cascade"/>
    <property type="evidence" value="ECO:0000266"/>
    <property type="project" value="RGD"/>
</dbReference>
<dbReference type="GO" id="GO:0010749">
    <property type="term" value="P:regulation of nitric oxide mediated signal transduction"/>
    <property type="evidence" value="ECO:0000266"/>
    <property type="project" value="RGD"/>
</dbReference>
<dbReference type="GO" id="GO:0051593">
    <property type="term" value="P:response to folic acid"/>
    <property type="evidence" value="ECO:0000266"/>
    <property type="project" value="RGD"/>
</dbReference>
<dbReference type="GO" id="GO:0031667">
    <property type="term" value="P:response to nutrient levels"/>
    <property type="evidence" value="ECO:0000270"/>
    <property type="project" value="RGD"/>
</dbReference>
<dbReference type="GO" id="GO:0006801">
    <property type="term" value="P:superoxide metabolic process"/>
    <property type="evidence" value="ECO:0000266"/>
    <property type="project" value="RGD"/>
</dbReference>
<dbReference type="GO" id="GO:0019346">
    <property type="term" value="P:transsulfuration"/>
    <property type="evidence" value="ECO:0000314"/>
    <property type="project" value="RGD"/>
</dbReference>
<dbReference type="CDD" id="cd01561">
    <property type="entry name" value="CBS_like"/>
    <property type="match status" value="1"/>
</dbReference>
<dbReference type="CDD" id="cd04608">
    <property type="entry name" value="CBS_pair_CBS"/>
    <property type="match status" value="1"/>
</dbReference>
<dbReference type="FunFam" id="3.10.580.10:FF:000014">
    <property type="entry name" value="Cystathionine beta-synthase"/>
    <property type="match status" value="1"/>
</dbReference>
<dbReference type="FunFam" id="3.40.50.1100:FF:000003">
    <property type="entry name" value="Cystathionine beta-synthase"/>
    <property type="match status" value="1"/>
</dbReference>
<dbReference type="FunFam" id="3.40.50.1100:FF:000118">
    <property type="entry name" value="Related to CYS4-cystathionine beta-synthase"/>
    <property type="match status" value="1"/>
</dbReference>
<dbReference type="Gene3D" id="3.40.50.1100">
    <property type="match status" value="2"/>
</dbReference>
<dbReference type="Gene3D" id="3.10.580.10">
    <property type="entry name" value="CBS-domain"/>
    <property type="match status" value="1"/>
</dbReference>
<dbReference type="InterPro" id="IPR046353">
    <property type="entry name" value="CBS_C"/>
</dbReference>
<dbReference type="InterPro" id="IPR000644">
    <property type="entry name" value="CBS_dom"/>
</dbReference>
<dbReference type="InterPro" id="IPR046342">
    <property type="entry name" value="CBS_dom_sf"/>
</dbReference>
<dbReference type="InterPro" id="IPR050214">
    <property type="entry name" value="Cys_Synth/Cystath_Beta-Synth"/>
</dbReference>
<dbReference type="InterPro" id="IPR005857">
    <property type="entry name" value="Cysta_beta_synth"/>
</dbReference>
<dbReference type="InterPro" id="IPR001216">
    <property type="entry name" value="P-phosphate_BS"/>
</dbReference>
<dbReference type="InterPro" id="IPR001926">
    <property type="entry name" value="TrpB-like_PALP"/>
</dbReference>
<dbReference type="InterPro" id="IPR036052">
    <property type="entry name" value="TrpB-like_PALP_sf"/>
</dbReference>
<dbReference type="NCBIfam" id="TIGR01137">
    <property type="entry name" value="cysta_beta"/>
    <property type="match status" value="1"/>
</dbReference>
<dbReference type="PANTHER" id="PTHR10314">
    <property type="entry name" value="CYSTATHIONINE BETA-SYNTHASE"/>
    <property type="match status" value="1"/>
</dbReference>
<dbReference type="Pfam" id="PF00571">
    <property type="entry name" value="CBS"/>
    <property type="match status" value="1"/>
</dbReference>
<dbReference type="Pfam" id="PF00291">
    <property type="entry name" value="PALP"/>
    <property type="match status" value="1"/>
</dbReference>
<dbReference type="SMART" id="SM00116">
    <property type="entry name" value="CBS"/>
    <property type="match status" value="1"/>
</dbReference>
<dbReference type="SUPFAM" id="SSF54631">
    <property type="entry name" value="CBS-domain pair"/>
    <property type="match status" value="1"/>
</dbReference>
<dbReference type="SUPFAM" id="SSF53686">
    <property type="entry name" value="Tryptophan synthase beta subunit-like PLP-dependent enzymes"/>
    <property type="match status" value="1"/>
</dbReference>
<dbReference type="PROSITE" id="PS51371">
    <property type="entry name" value="CBS"/>
    <property type="match status" value="1"/>
</dbReference>
<dbReference type="PROSITE" id="PS00901">
    <property type="entry name" value="CYS_SYNTHASE"/>
    <property type="match status" value="1"/>
</dbReference>
<accession>P32232</accession>